<name>MCR1_PYRO7</name>
<sequence length="331" mass="36574">MFARPAIRACQSLKQPVRRYTNTPPPQSGNANNSRVGILIASAVGMAGFGTYFMFGQGTTPAAGVKALGAEPKKALEMEKGFVSLQLDDVEVVNHNTKRLRFKLPEDDMVSGLHVASALLTKFKPEGAEKPVLRPYTPISDEDQKGYLDLIVKKYEGGPMSTHIHELVPGQKLDFKGPLPKYEWSANKHPHVAMIAGGTGITPMYQIMRAIFKNPADKTKVTLVVGNITEEDILLKKQLAELENTYPQRFRAFYVLDNPPKDWAGTKGYITKDLLKTVLPEPKEENIKVFVCGPPGMMKAISGNKVSPKDQGEVSGILKELGYKQDQIYKF</sequence>
<feature type="chain" id="PRO_0000330184" description="NADH-cytochrome b5 reductase 2">
    <location>
        <begin position="1"/>
        <end position="331"/>
    </location>
</feature>
<feature type="transmembrane region" description="Helical" evidence="2">
    <location>
        <begin position="36"/>
        <end position="56"/>
    </location>
</feature>
<feature type="domain" description="FAD-binding FR-type" evidence="3">
    <location>
        <begin position="80"/>
        <end position="185"/>
    </location>
</feature>
<feature type="binding site" evidence="1">
    <location>
        <begin position="188"/>
        <end position="223"/>
    </location>
    <ligand>
        <name>FAD</name>
        <dbReference type="ChEBI" id="CHEBI:57692"/>
    </ligand>
</feature>
<accession>A4QR21</accession>
<accession>G4N6I4</accession>
<gene>
    <name type="primary">MCR1</name>
    <name type="ORF">MGG_03708</name>
</gene>
<protein>
    <recommendedName>
        <fullName>NADH-cytochrome b5 reductase 2</fullName>
        <ecNumber>1.6.2.2</ecNumber>
    </recommendedName>
    <alternativeName>
        <fullName>Mitochondrial cytochrome b reductase</fullName>
    </alternativeName>
</protein>
<evidence type="ECO:0000250" key="1"/>
<evidence type="ECO:0000255" key="2"/>
<evidence type="ECO:0000255" key="3">
    <source>
        <dbReference type="PROSITE-ProRule" id="PRU00716"/>
    </source>
</evidence>
<evidence type="ECO:0000305" key="4"/>
<reference key="1">
    <citation type="journal article" date="2005" name="Nature">
        <title>The genome sequence of the rice blast fungus Magnaporthe grisea.</title>
        <authorList>
            <person name="Dean R.A."/>
            <person name="Talbot N.J."/>
            <person name="Ebbole D.J."/>
            <person name="Farman M.L."/>
            <person name="Mitchell T.K."/>
            <person name="Orbach M.J."/>
            <person name="Thon M.R."/>
            <person name="Kulkarni R."/>
            <person name="Xu J.-R."/>
            <person name="Pan H."/>
            <person name="Read N.D."/>
            <person name="Lee Y.-H."/>
            <person name="Carbone I."/>
            <person name="Brown D."/>
            <person name="Oh Y.Y."/>
            <person name="Donofrio N."/>
            <person name="Jeong J.S."/>
            <person name="Soanes D.M."/>
            <person name="Djonovic S."/>
            <person name="Kolomiets E."/>
            <person name="Rehmeyer C."/>
            <person name="Li W."/>
            <person name="Harding M."/>
            <person name="Kim S."/>
            <person name="Lebrun M.-H."/>
            <person name="Bohnert H."/>
            <person name="Coughlan S."/>
            <person name="Butler J."/>
            <person name="Calvo S.E."/>
            <person name="Ma L.-J."/>
            <person name="Nicol R."/>
            <person name="Purcell S."/>
            <person name="Nusbaum C."/>
            <person name="Galagan J.E."/>
            <person name="Birren B.W."/>
        </authorList>
    </citation>
    <scope>NUCLEOTIDE SEQUENCE [LARGE SCALE GENOMIC DNA]</scope>
    <source>
        <strain>70-15 / ATCC MYA-4617 / FGSC 8958</strain>
    </source>
</reference>
<keyword id="KW-0274">FAD</keyword>
<keyword id="KW-0285">Flavoprotein</keyword>
<keyword id="KW-0472">Membrane</keyword>
<keyword id="KW-0496">Mitochondrion</keyword>
<keyword id="KW-1000">Mitochondrion outer membrane</keyword>
<keyword id="KW-0520">NAD</keyword>
<keyword id="KW-0560">Oxidoreductase</keyword>
<keyword id="KW-1185">Reference proteome</keyword>
<keyword id="KW-0812">Transmembrane</keyword>
<keyword id="KW-1133">Transmembrane helix</keyword>
<comment type="function">
    <text evidence="1">May mediate the reduction of outer membrane cytochrome b5.</text>
</comment>
<comment type="catalytic activity">
    <reaction>
        <text>2 Fe(III)-[cytochrome b5] + NADH = 2 Fe(II)-[cytochrome b5] + NAD(+) + H(+)</text>
        <dbReference type="Rhea" id="RHEA:46680"/>
        <dbReference type="Rhea" id="RHEA-COMP:10438"/>
        <dbReference type="Rhea" id="RHEA-COMP:10439"/>
        <dbReference type="ChEBI" id="CHEBI:15378"/>
        <dbReference type="ChEBI" id="CHEBI:29033"/>
        <dbReference type="ChEBI" id="CHEBI:29034"/>
        <dbReference type="ChEBI" id="CHEBI:57540"/>
        <dbReference type="ChEBI" id="CHEBI:57945"/>
        <dbReference type="EC" id="1.6.2.2"/>
    </reaction>
</comment>
<comment type="cofactor">
    <cofactor evidence="1">
        <name>FAD</name>
        <dbReference type="ChEBI" id="CHEBI:57692"/>
    </cofactor>
</comment>
<comment type="subcellular location">
    <subcellularLocation>
        <location evidence="1">Mitochondrion outer membrane</location>
        <topology evidence="1">Single-pass membrane protein</topology>
    </subcellularLocation>
</comment>
<comment type="similarity">
    <text evidence="4">Belongs to the flavoprotein pyridine nucleotide cytochrome reductase family.</text>
</comment>
<proteinExistence type="inferred from homology"/>
<organism>
    <name type="scientific">Pyricularia oryzae (strain 70-15 / ATCC MYA-4617 / FGSC 8958)</name>
    <name type="common">Rice blast fungus</name>
    <name type="synonym">Magnaporthe oryzae</name>
    <dbReference type="NCBI Taxonomy" id="242507"/>
    <lineage>
        <taxon>Eukaryota</taxon>
        <taxon>Fungi</taxon>
        <taxon>Dikarya</taxon>
        <taxon>Ascomycota</taxon>
        <taxon>Pezizomycotina</taxon>
        <taxon>Sordariomycetes</taxon>
        <taxon>Sordariomycetidae</taxon>
        <taxon>Magnaporthales</taxon>
        <taxon>Pyriculariaceae</taxon>
        <taxon>Pyricularia</taxon>
    </lineage>
</organism>
<dbReference type="EC" id="1.6.2.2"/>
<dbReference type="EMBL" id="CM001234">
    <property type="protein sequence ID" value="EHA49854.1"/>
    <property type="molecule type" value="Genomic_DNA"/>
</dbReference>
<dbReference type="RefSeq" id="XP_003716173.1">
    <property type="nucleotide sequence ID" value="XM_003716125.1"/>
</dbReference>
<dbReference type="SMR" id="A4QR21"/>
<dbReference type="FunCoup" id="A4QR21">
    <property type="interactions" value="311"/>
</dbReference>
<dbReference type="STRING" id="242507.A4QR21"/>
<dbReference type="EnsemblFungi" id="MGG_03708T0">
    <property type="protein sequence ID" value="MGG_03708T0"/>
    <property type="gene ID" value="MGG_03708"/>
</dbReference>
<dbReference type="GeneID" id="2676781"/>
<dbReference type="KEGG" id="mgr:MGG_03708"/>
<dbReference type="VEuPathDB" id="FungiDB:MGG_03708"/>
<dbReference type="eggNOG" id="KOG0534">
    <property type="taxonomic scope" value="Eukaryota"/>
</dbReference>
<dbReference type="HOGENOM" id="CLU_003827_9_1_1"/>
<dbReference type="InParanoid" id="A4QR21"/>
<dbReference type="OMA" id="KGPEMQK"/>
<dbReference type="OrthoDB" id="432685at2759"/>
<dbReference type="Proteomes" id="UP000009058">
    <property type="component" value="Chromosome 4"/>
</dbReference>
<dbReference type="GO" id="GO:0005741">
    <property type="term" value="C:mitochondrial outer membrane"/>
    <property type="evidence" value="ECO:0007669"/>
    <property type="project" value="UniProtKB-SubCell"/>
</dbReference>
<dbReference type="GO" id="GO:0004128">
    <property type="term" value="F:cytochrome-b5 reductase activity, acting on NAD(P)H"/>
    <property type="evidence" value="ECO:0007669"/>
    <property type="project" value="UniProtKB-EC"/>
</dbReference>
<dbReference type="GO" id="GO:0006696">
    <property type="term" value="P:ergosterol biosynthetic process"/>
    <property type="evidence" value="ECO:0007669"/>
    <property type="project" value="TreeGrafter"/>
</dbReference>
<dbReference type="CDD" id="cd06183">
    <property type="entry name" value="cyt_b5_reduct_like"/>
    <property type="match status" value="1"/>
</dbReference>
<dbReference type="FunFam" id="2.40.30.10:FF:000032">
    <property type="entry name" value="NADH-cytochrome b5 reductase"/>
    <property type="match status" value="1"/>
</dbReference>
<dbReference type="FunFam" id="3.40.50.80:FF:000009">
    <property type="entry name" value="NADH-cytochrome b5 reductase"/>
    <property type="match status" value="1"/>
</dbReference>
<dbReference type="Gene3D" id="3.40.50.80">
    <property type="entry name" value="Nucleotide-binding domain of ferredoxin-NADP reductase (FNR) module"/>
    <property type="match status" value="1"/>
</dbReference>
<dbReference type="Gene3D" id="2.40.30.10">
    <property type="entry name" value="Translation factors"/>
    <property type="match status" value="1"/>
</dbReference>
<dbReference type="InterPro" id="IPR001834">
    <property type="entry name" value="CBR-like"/>
</dbReference>
<dbReference type="InterPro" id="IPR008333">
    <property type="entry name" value="Cbr1-like_FAD-bd_dom"/>
</dbReference>
<dbReference type="InterPro" id="IPR017927">
    <property type="entry name" value="FAD-bd_FR_type"/>
</dbReference>
<dbReference type="InterPro" id="IPR001709">
    <property type="entry name" value="Flavoprot_Pyr_Nucl_cyt_Rdtase"/>
</dbReference>
<dbReference type="InterPro" id="IPR039261">
    <property type="entry name" value="FNR_nucleotide-bd"/>
</dbReference>
<dbReference type="InterPro" id="IPR001433">
    <property type="entry name" value="OxRdtase_FAD/NAD-bd"/>
</dbReference>
<dbReference type="InterPro" id="IPR017938">
    <property type="entry name" value="Riboflavin_synthase-like_b-brl"/>
</dbReference>
<dbReference type="PANTHER" id="PTHR19370">
    <property type="entry name" value="NADH-CYTOCHROME B5 REDUCTASE"/>
    <property type="match status" value="1"/>
</dbReference>
<dbReference type="PANTHER" id="PTHR19370:SF171">
    <property type="entry name" value="NADH-CYTOCHROME B5 REDUCTASE 2"/>
    <property type="match status" value="1"/>
</dbReference>
<dbReference type="Pfam" id="PF00970">
    <property type="entry name" value="FAD_binding_6"/>
    <property type="match status" value="1"/>
</dbReference>
<dbReference type="Pfam" id="PF00175">
    <property type="entry name" value="NAD_binding_1"/>
    <property type="match status" value="1"/>
</dbReference>
<dbReference type="PRINTS" id="PR00406">
    <property type="entry name" value="CYTB5RDTASE"/>
</dbReference>
<dbReference type="PRINTS" id="PR00371">
    <property type="entry name" value="FPNCR"/>
</dbReference>
<dbReference type="SUPFAM" id="SSF52343">
    <property type="entry name" value="Ferredoxin reductase-like, C-terminal NADP-linked domain"/>
    <property type="match status" value="1"/>
</dbReference>
<dbReference type="SUPFAM" id="SSF63380">
    <property type="entry name" value="Riboflavin synthase domain-like"/>
    <property type="match status" value="1"/>
</dbReference>
<dbReference type="PROSITE" id="PS51384">
    <property type="entry name" value="FAD_FR"/>
    <property type="match status" value="1"/>
</dbReference>